<evidence type="ECO:0000250" key="1"/>
<evidence type="ECO:0000269" key="2">
    <source>
    </source>
</evidence>
<evidence type="ECO:0000305" key="3"/>
<evidence type="ECO:0000305" key="4">
    <source>
    </source>
</evidence>
<evidence type="ECO:0007829" key="5">
    <source>
        <dbReference type="PDB" id="1QO2"/>
    </source>
</evidence>
<evidence type="ECO:0007829" key="6">
    <source>
        <dbReference type="PDB" id="2W79"/>
    </source>
</evidence>
<name>HIS4_THEMA</name>
<protein>
    <recommendedName>
        <fullName>1-(5-phosphoribosyl)-5-[(5-phosphoribosylamino)methylideneamino] imidazole-4-carboxamide isomerase</fullName>
        <ecNumber>5.3.1.16</ecNumber>
    </recommendedName>
    <alternativeName>
        <fullName>Phosphoribosylformimino-5-aminoimidazole carboxamide ribotide isomerase</fullName>
    </alternativeName>
</protein>
<dbReference type="EC" id="5.3.1.16"/>
<dbReference type="EMBL" id="AE000512">
    <property type="protein sequence ID" value="AAD36114.1"/>
    <property type="molecule type" value="Genomic_DNA"/>
</dbReference>
<dbReference type="PIR" id="D72304">
    <property type="entry name" value="D72304"/>
</dbReference>
<dbReference type="RefSeq" id="NP_228843.1">
    <property type="nucleotide sequence ID" value="NC_000853.1"/>
</dbReference>
<dbReference type="RefSeq" id="WP_004080485.1">
    <property type="nucleotide sequence ID" value="NZ_CP011107.1"/>
</dbReference>
<dbReference type="PDB" id="1QO2">
    <property type="method" value="X-ray"/>
    <property type="resolution" value="1.85 A"/>
    <property type="chains" value="A/B=1-241"/>
</dbReference>
<dbReference type="PDB" id="2CFF">
    <property type="method" value="X-ray"/>
    <property type="resolution" value="2.50 A"/>
    <property type="chains" value="A/B=1-241"/>
</dbReference>
<dbReference type="PDB" id="2W79">
    <property type="method" value="X-ray"/>
    <property type="resolution" value="1.85 A"/>
    <property type="chains" value="A/B=1-241"/>
</dbReference>
<dbReference type="PDBsum" id="1QO2"/>
<dbReference type="PDBsum" id="2CFF"/>
<dbReference type="PDBsum" id="2W79"/>
<dbReference type="SMR" id="Q9X0C7"/>
<dbReference type="FunCoup" id="Q9X0C7">
    <property type="interactions" value="279"/>
</dbReference>
<dbReference type="STRING" id="243274.TM_1037"/>
<dbReference type="PaxDb" id="243274-THEMA_09175"/>
<dbReference type="EnsemblBacteria" id="AAD36114">
    <property type="protein sequence ID" value="AAD36114"/>
    <property type="gene ID" value="TM_1037"/>
</dbReference>
<dbReference type="KEGG" id="tma:TM1037"/>
<dbReference type="KEGG" id="tmi:THEMA_09175"/>
<dbReference type="KEGG" id="tmm:Tmari_1041"/>
<dbReference type="KEGG" id="tmw:THMA_1059"/>
<dbReference type="eggNOG" id="COG0106">
    <property type="taxonomic scope" value="Bacteria"/>
</dbReference>
<dbReference type="InParanoid" id="Q9X0C7"/>
<dbReference type="OrthoDB" id="9807749at2"/>
<dbReference type="SABIO-RK" id="Q9X0C7"/>
<dbReference type="UniPathway" id="UPA00031">
    <property type="reaction ID" value="UER00009"/>
</dbReference>
<dbReference type="EvolutionaryTrace" id="Q9X0C7"/>
<dbReference type="Proteomes" id="UP000008183">
    <property type="component" value="Chromosome"/>
</dbReference>
<dbReference type="GO" id="GO:0005737">
    <property type="term" value="C:cytoplasm"/>
    <property type="evidence" value="ECO:0000318"/>
    <property type="project" value="GO_Central"/>
</dbReference>
<dbReference type="GO" id="GO:0003949">
    <property type="term" value="F:1-(5-phosphoribosyl)-5-[(5-phosphoribosylamino)methylideneamino]imidazole-4-carboxamide isomerase activity"/>
    <property type="evidence" value="ECO:0000318"/>
    <property type="project" value="GO_Central"/>
</dbReference>
<dbReference type="GO" id="GO:0000105">
    <property type="term" value="P:L-histidine biosynthetic process"/>
    <property type="evidence" value="ECO:0000318"/>
    <property type="project" value="GO_Central"/>
</dbReference>
<dbReference type="CDD" id="cd04732">
    <property type="entry name" value="HisA"/>
    <property type="match status" value="1"/>
</dbReference>
<dbReference type="FunFam" id="3.20.20.70:FF:000412">
    <property type="entry name" value="1-(5-phosphoribosyl)-5-[(5-phosphoribosylamino)methylideneamino] imidazole-4-carboxamide isomerase"/>
    <property type="match status" value="1"/>
</dbReference>
<dbReference type="Gene3D" id="3.20.20.70">
    <property type="entry name" value="Aldolase class I"/>
    <property type="match status" value="1"/>
</dbReference>
<dbReference type="HAMAP" id="MF_01014">
    <property type="entry name" value="HisA"/>
    <property type="match status" value="1"/>
</dbReference>
<dbReference type="InterPro" id="IPR013785">
    <property type="entry name" value="Aldolase_TIM"/>
</dbReference>
<dbReference type="InterPro" id="IPR006062">
    <property type="entry name" value="His_biosynth"/>
</dbReference>
<dbReference type="InterPro" id="IPR006063">
    <property type="entry name" value="HisA_bact_arch"/>
</dbReference>
<dbReference type="InterPro" id="IPR044524">
    <property type="entry name" value="Isoase_HisA-like"/>
</dbReference>
<dbReference type="InterPro" id="IPR023016">
    <property type="entry name" value="Isoase_HisA-like_bact"/>
</dbReference>
<dbReference type="InterPro" id="IPR011060">
    <property type="entry name" value="RibuloseP-bd_barrel"/>
</dbReference>
<dbReference type="NCBIfam" id="TIGR00007">
    <property type="entry name" value="1-(5-phosphoribosyl)-5-[(5-phosphoribosylamino)methylideneamino]imidazole-4-carboxamide isomerase"/>
    <property type="match status" value="1"/>
</dbReference>
<dbReference type="NCBIfam" id="NF010712">
    <property type="entry name" value="PRK14114.1"/>
    <property type="match status" value="1"/>
</dbReference>
<dbReference type="PANTHER" id="PTHR43090">
    <property type="entry name" value="1-(5-PHOSPHORIBOSYL)-5-[(5-PHOSPHORIBOSYLAMINO)METHYLIDENEAMINO] IMIDAZOLE-4-CARBOXAMIDE ISOMERASE"/>
    <property type="match status" value="1"/>
</dbReference>
<dbReference type="PANTHER" id="PTHR43090:SF2">
    <property type="entry name" value="1-(5-PHOSPHORIBOSYL)-5-[(5-PHOSPHORIBOSYLAMINO)METHYLIDENEAMINO] IMIDAZOLE-4-CARBOXAMIDE ISOMERASE"/>
    <property type="match status" value="1"/>
</dbReference>
<dbReference type="Pfam" id="PF00977">
    <property type="entry name" value="His_biosynth"/>
    <property type="match status" value="1"/>
</dbReference>
<dbReference type="SUPFAM" id="SSF51366">
    <property type="entry name" value="Ribulose-phoshate binding barrel"/>
    <property type="match status" value="1"/>
</dbReference>
<accession>Q9X0C7</accession>
<reference key="1">
    <citation type="journal article" date="1999" name="Nature">
        <title>Evidence for lateral gene transfer between Archaea and Bacteria from genome sequence of Thermotoga maritima.</title>
        <authorList>
            <person name="Nelson K.E."/>
            <person name="Clayton R.A."/>
            <person name="Gill S.R."/>
            <person name="Gwinn M.L."/>
            <person name="Dodson R.J."/>
            <person name="Haft D.H."/>
            <person name="Hickey E.K."/>
            <person name="Peterson J.D."/>
            <person name="Nelson W.C."/>
            <person name="Ketchum K.A."/>
            <person name="McDonald L.A."/>
            <person name="Utterback T.R."/>
            <person name="Malek J.A."/>
            <person name="Linher K.D."/>
            <person name="Garrett M.M."/>
            <person name="Stewart A.M."/>
            <person name="Cotton M.D."/>
            <person name="Pratt M.S."/>
            <person name="Phillips C.A."/>
            <person name="Richardson D.L."/>
            <person name="Heidelberg J.F."/>
            <person name="Sutton G.G."/>
            <person name="Fleischmann R.D."/>
            <person name="Eisen J.A."/>
            <person name="White O."/>
            <person name="Salzberg S.L."/>
            <person name="Smith H.O."/>
            <person name="Venter J.C."/>
            <person name="Fraser C.M."/>
        </authorList>
    </citation>
    <scope>NUCLEOTIDE SEQUENCE [LARGE SCALE GENOMIC DNA]</scope>
    <source>
        <strain>ATCC 43589 / DSM 3109 / JCM 10099 / NBRC 100826 / MSB8</strain>
    </source>
</reference>
<reference key="2">
    <citation type="journal article" date="2002" name="Biochemistry">
        <title>Two (betaalpha)(8)-barrel enzymes of histidine and tryptophan biosynthesis have similar reaction mechanisms and common strategies for protecting their labile substrates.</title>
        <authorList>
            <person name="Henn-Sax M."/>
            <person name="Thoma R."/>
            <person name="Schmidt S."/>
            <person name="Hennig M."/>
            <person name="Kirschner K."/>
            <person name="Sterner R."/>
        </authorList>
    </citation>
    <scope>ACTIVE SITES</scope>
    <scope>SUBUNIT</scope>
    <scope>MUTAGENESIS OF ASP-8; HIS-48; ASP-51; ARG-83; ASP-127 AND THR-164</scope>
</reference>
<reference key="3">
    <citation type="journal article" date="2000" name="Science">
        <title>Structural evidence for evolution of the beta/alpha barrel scaffold by gene duplication and fusion.</title>
        <authorList>
            <person name="Lang D."/>
            <person name="Thoma R."/>
            <person name="Henn-Sax M."/>
            <person name="Sterner R."/>
            <person name="Wilmanns M."/>
        </authorList>
    </citation>
    <scope>X-RAY CRYSTALLOGRAPHY (1.85 ANGSTROMS)</scope>
</reference>
<gene>
    <name type="primary">hisA</name>
    <name type="ordered locus">TM_1037</name>
</gene>
<keyword id="KW-0002">3D-structure</keyword>
<keyword id="KW-0028">Amino-acid biosynthesis</keyword>
<keyword id="KW-0963">Cytoplasm</keyword>
<keyword id="KW-0368">Histidine biosynthesis</keyword>
<keyword id="KW-0413">Isomerase</keyword>
<keyword id="KW-1185">Reference proteome</keyword>
<sequence>MLVVPAIDLFRGKVARMIKGRKENTIFYEKDPVELVEKLIEEGFTLIHVVDLSNAIENSGENLPVLEKLSEFAEHIQIGGGIRSLDYAEKLRKLGYRRQIVSSKVLEDPSFLKSLREIDVEPVFSLDTRGGRVAFKGWLAEEEIDPVSLLKRLKEYGLEEIVHTEIEKDGTLQEHDFSLTKKIAIEAEVKVLAAGGISSENSLKTAQKVHTETNGLLKGVIVGRAFLEGILTVEVMKRYAR</sequence>
<organism>
    <name type="scientific">Thermotoga maritima (strain ATCC 43589 / DSM 3109 / JCM 10099 / NBRC 100826 / MSB8)</name>
    <dbReference type="NCBI Taxonomy" id="243274"/>
    <lineage>
        <taxon>Bacteria</taxon>
        <taxon>Thermotogati</taxon>
        <taxon>Thermotogota</taxon>
        <taxon>Thermotogae</taxon>
        <taxon>Thermotogales</taxon>
        <taxon>Thermotogaceae</taxon>
        <taxon>Thermotoga</taxon>
    </lineage>
</organism>
<proteinExistence type="evidence at protein level"/>
<feature type="chain" id="PRO_0000142068" description="1-(5-phosphoribosyl)-5-[(5-phosphoribosylamino)methylideneamino] imidazole-4-carboxamide isomerase">
    <location>
        <begin position="1"/>
        <end position="241"/>
    </location>
</feature>
<feature type="active site" description="Proton acceptor" evidence="4">
    <location>
        <position position="8"/>
    </location>
</feature>
<feature type="active site" description="Proton donor" evidence="4">
    <location>
        <position position="127"/>
    </location>
</feature>
<feature type="mutagenesis site" description="Loss of activity." evidence="2">
    <original>D</original>
    <variation>N</variation>
    <location>
        <position position="8"/>
    </location>
</feature>
<feature type="mutagenesis site" description="Decrease in activity." evidence="2">
    <original>H</original>
    <variation>A</variation>
    <location>
        <position position="48"/>
    </location>
</feature>
<feature type="mutagenesis site" description="Decrease in activity." evidence="2">
    <original>D</original>
    <variation>N</variation>
    <location>
        <position position="51"/>
    </location>
</feature>
<feature type="mutagenesis site" description="Decrease in activity." evidence="2">
    <original>R</original>
    <variation>N</variation>
    <location>
        <position position="83"/>
    </location>
</feature>
<feature type="mutagenesis site" description="Almost no activity." evidence="2">
    <original>D</original>
    <variation>N</variation>
    <location>
        <position position="127"/>
    </location>
</feature>
<feature type="mutagenesis site" description="Strong decrease in activity." evidence="2">
    <original>T</original>
    <variation>A</variation>
    <location>
        <position position="164"/>
    </location>
</feature>
<feature type="strand" evidence="5">
    <location>
        <begin position="2"/>
        <end position="10"/>
    </location>
</feature>
<feature type="strand" evidence="5">
    <location>
        <begin position="13"/>
        <end position="17"/>
    </location>
</feature>
<feature type="helix" evidence="5">
    <location>
        <begin position="18"/>
        <end position="20"/>
    </location>
</feature>
<feature type="helix" evidence="5">
    <location>
        <begin position="22"/>
        <end position="24"/>
    </location>
</feature>
<feature type="strand" evidence="5">
    <location>
        <begin position="25"/>
        <end position="30"/>
    </location>
</feature>
<feature type="helix" evidence="5">
    <location>
        <begin position="32"/>
        <end position="41"/>
    </location>
</feature>
<feature type="strand" evidence="5">
    <location>
        <begin position="47"/>
        <end position="51"/>
    </location>
</feature>
<feature type="helix" evidence="5">
    <location>
        <begin position="52"/>
        <end position="57"/>
    </location>
</feature>
<feature type="helix" evidence="5">
    <location>
        <begin position="63"/>
        <end position="68"/>
    </location>
</feature>
<feature type="helix" evidence="5">
    <location>
        <begin position="69"/>
        <end position="75"/>
    </location>
</feature>
<feature type="strand" evidence="5">
    <location>
        <begin position="76"/>
        <end position="81"/>
    </location>
</feature>
<feature type="helix" evidence="5">
    <location>
        <begin position="85"/>
        <end position="93"/>
    </location>
</feature>
<feature type="strand" evidence="5">
    <location>
        <begin position="98"/>
        <end position="101"/>
    </location>
</feature>
<feature type="helix" evidence="5">
    <location>
        <begin position="103"/>
        <end position="107"/>
    </location>
</feature>
<feature type="helix" evidence="5">
    <location>
        <begin position="111"/>
        <end position="116"/>
    </location>
</feature>
<feature type="turn" evidence="5">
    <location>
        <begin position="117"/>
        <end position="119"/>
    </location>
</feature>
<feature type="strand" evidence="5">
    <location>
        <begin position="121"/>
        <end position="129"/>
    </location>
</feature>
<feature type="helix" evidence="6">
    <location>
        <begin position="141"/>
        <end position="144"/>
    </location>
</feature>
<feature type="helix" evidence="5">
    <location>
        <begin position="146"/>
        <end position="154"/>
    </location>
</feature>
<feature type="turn" evidence="5">
    <location>
        <begin position="155"/>
        <end position="157"/>
    </location>
</feature>
<feature type="strand" evidence="5">
    <location>
        <begin position="160"/>
        <end position="165"/>
    </location>
</feature>
<feature type="helix" evidence="5">
    <location>
        <begin position="168"/>
        <end position="171"/>
    </location>
</feature>
<feature type="helix" evidence="5">
    <location>
        <begin position="177"/>
        <end position="187"/>
    </location>
</feature>
<feature type="strand" evidence="5">
    <location>
        <begin position="190"/>
        <end position="196"/>
    </location>
</feature>
<feature type="helix" evidence="5">
    <location>
        <begin position="200"/>
        <end position="212"/>
    </location>
</feature>
<feature type="turn" evidence="5">
    <location>
        <begin position="213"/>
        <end position="215"/>
    </location>
</feature>
<feature type="strand" evidence="5">
    <location>
        <begin position="216"/>
        <end position="222"/>
    </location>
</feature>
<feature type="helix" evidence="5">
    <location>
        <begin position="224"/>
        <end position="227"/>
    </location>
</feature>
<feature type="helix" evidence="5">
    <location>
        <begin position="233"/>
        <end position="240"/>
    </location>
</feature>
<comment type="catalytic activity">
    <reaction>
        <text>1-(5-phospho-beta-D-ribosyl)-5-[(5-phospho-beta-D-ribosylamino)methylideneamino]imidazole-4-carboxamide = 5-[(5-phospho-1-deoxy-D-ribulos-1-ylimino)methylamino]-1-(5-phospho-beta-D-ribosyl)imidazole-4-carboxamide</text>
        <dbReference type="Rhea" id="RHEA:15469"/>
        <dbReference type="ChEBI" id="CHEBI:58435"/>
        <dbReference type="ChEBI" id="CHEBI:58525"/>
        <dbReference type="EC" id="5.3.1.16"/>
    </reaction>
</comment>
<comment type="pathway">
    <text>Amino-acid biosynthesis; L-histidine biosynthesis; L-histidine from 5-phospho-alpha-D-ribose 1-diphosphate: step 4/9.</text>
</comment>
<comment type="subunit">
    <text evidence="2">Monomer.</text>
</comment>
<comment type="subcellular location">
    <subcellularLocation>
        <location evidence="1">Cytoplasm</location>
    </subcellularLocation>
</comment>
<comment type="similarity">
    <text evidence="3">Belongs to the HisA/HisF family.</text>
</comment>